<comment type="function">
    <text evidence="1">DNA ligase that catalyzes the formation of phosphodiester linkages between 5'-phosphoryl and 3'-hydroxyl groups in double-stranded DNA using NAD as a coenzyme and as the energy source for the reaction. It is essential for DNA replication and repair of damaged DNA.</text>
</comment>
<comment type="catalytic activity">
    <reaction evidence="1">
        <text>NAD(+) + (deoxyribonucleotide)n-3'-hydroxyl + 5'-phospho-(deoxyribonucleotide)m = (deoxyribonucleotide)n+m + AMP + beta-nicotinamide D-nucleotide.</text>
        <dbReference type="EC" id="6.5.1.2"/>
    </reaction>
</comment>
<comment type="cofactor">
    <cofactor evidence="1">
        <name>Mg(2+)</name>
        <dbReference type="ChEBI" id="CHEBI:18420"/>
    </cofactor>
    <cofactor evidence="1">
        <name>Mn(2+)</name>
        <dbReference type="ChEBI" id="CHEBI:29035"/>
    </cofactor>
</comment>
<comment type="similarity">
    <text evidence="1">Belongs to the NAD-dependent DNA ligase family. LigA subfamily.</text>
</comment>
<name>DNLJ_LEPBL</name>
<gene>
    <name evidence="1" type="primary">ligA</name>
    <name type="ordered locus">LBL_2907</name>
</gene>
<reference key="1">
    <citation type="journal article" date="2006" name="Proc. Natl. Acad. Sci. U.S.A.">
        <title>Genome reduction in Leptospira borgpetersenii reflects limited transmission potential.</title>
        <authorList>
            <person name="Bulach D.M."/>
            <person name="Zuerner R.L."/>
            <person name="Wilson P."/>
            <person name="Seemann T."/>
            <person name="McGrath A."/>
            <person name="Cullen P.A."/>
            <person name="Davis J."/>
            <person name="Johnson M."/>
            <person name="Kuczek E."/>
            <person name="Alt D.P."/>
            <person name="Peterson-Burch B."/>
            <person name="Coppel R.L."/>
            <person name="Rood J.I."/>
            <person name="Davies J.K."/>
            <person name="Adler B."/>
        </authorList>
    </citation>
    <scope>NUCLEOTIDE SEQUENCE [LARGE SCALE GENOMIC DNA]</scope>
    <source>
        <strain>L550</strain>
    </source>
</reference>
<evidence type="ECO:0000255" key="1">
    <source>
        <dbReference type="HAMAP-Rule" id="MF_01588"/>
    </source>
</evidence>
<accession>Q04XH0</accession>
<protein>
    <recommendedName>
        <fullName evidence="1">DNA ligase</fullName>
        <ecNumber evidence="1">6.5.1.2</ecNumber>
    </recommendedName>
    <alternativeName>
        <fullName evidence="1">Polydeoxyribonucleotide synthase [NAD(+)]</fullName>
    </alternativeName>
</protein>
<dbReference type="EC" id="6.5.1.2" evidence="1"/>
<dbReference type="EMBL" id="CP000348">
    <property type="protein sequence ID" value="ABJ80225.1"/>
    <property type="molecule type" value="Genomic_DNA"/>
</dbReference>
<dbReference type="RefSeq" id="WP_011671138.1">
    <property type="nucleotide sequence ID" value="NC_008508.1"/>
</dbReference>
<dbReference type="SMR" id="Q04XH0"/>
<dbReference type="KEGG" id="lbl:LBL_2907"/>
<dbReference type="HOGENOM" id="CLU_007764_2_1_12"/>
<dbReference type="GO" id="GO:0003911">
    <property type="term" value="F:DNA ligase (NAD+) activity"/>
    <property type="evidence" value="ECO:0007669"/>
    <property type="project" value="UniProtKB-UniRule"/>
</dbReference>
<dbReference type="GO" id="GO:0046872">
    <property type="term" value="F:metal ion binding"/>
    <property type="evidence" value="ECO:0007669"/>
    <property type="project" value="UniProtKB-KW"/>
</dbReference>
<dbReference type="GO" id="GO:0006281">
    <property type="term" value="P:DNA repair"/>
    <property type="evidence" value="ECO:0007669"/>
    <property type="project" value="UniProtKB-KW"/>
</dbReference>
<dbReference type="GO" id="GO:0006260">
    <property type="term" value="P:DNA replication"/>
    <property type="evidence" value="ECO:0007669"/>
    <property type="project" value="UniProtKB-KW"/>
</dbReference>
<dbReference type="CDD" id="cd17748">
    <property type="entry name" value="BRCT_DNA_ligase_like"/>
    <property type="match status" value="1"/>
</dbReference>
<dbReference type="CDD" id="cd00114">
    <property type="entry name" value="LIGANc"/>
    <property type="match status" value="1"/>
</dbReference>
<dbReference type="FunFam" id="1.10.150.20:FF:000007">
    <property type="entry name" value="DNA ligase"/>
    <property type="match status" value="1"/>
</dbReference>
<dbReference type="FunFam" id="3.30.470.30:FF:000026">
    <property type="entry name" value="DNA ligase"/>
    <property type="match status" value="1"/>
</dbReference>
<dbReference type="FunFam" id="3.40.50.10190:FF:000087">
    <property type="entry name" value="DNA ligase"/>
    <property type="match status" value="1"/>
</dbReference>
<dbReference type="Gene3D" id="1.10.150.20">
    <property type="entry name" value="5' to 3' exonuclease, C-terminal subdomain"/>
    <property type="match status" value="2"/>
</dbReference>
<dbReference type="Gene3D" id="3.40.50.10190">
    <property type="entry name" value="BRCT domain"/>
    <property type="match status" value="1"/>
</dbReference>
<dbReference type="Gene3D" id="3.30.470.30">
    <property type="entry name" value="DNA ligase/mRNA capping enzyme"/>
    <property type="match status" value="1"/>
</dbReference>
<dbReference type="Gene3D" id="1.10.287.610">
    <property type="entry name" value="Helix hairpin bin"/>
    <property type="match status" value="1"/>
</dbReference>
<dbReference type="Gene3D" id="2.40.50.140">
    <property type="entry name" value="Nucleic acid-binding proteins"/>
    <property type="match status" value="1"/>
</dbReference>
<dbReference type="HAMAP" id="MF_01588">
    <property type="entry name" value="DNA_ligase_A"/>
    <property type="match status" value="1"/>
</dbReference>
<dbReference type="InterPro" id="IPR001357">
    <property type="entry name" value="BRCT_dom"/>
</dbReference>
<dbReference type="InterPro" id="IPR036420">
    <property type="entry name" value="BRCT_dom_sf"/>
</dbReference>
<dbReference type="InterPro" id="IPR001679">
    <property type="entry name" value="DNA_ligase"/>
</dbReference>
<dbReference type="InterPro" id="IPR013839">
    <property type="entry name" value="DNAligase_adenylation"/>
</dbReference>
<dbReference type="InterPro" id="IPR013840">
    <property type="entry name" value="DNAligase_N"/>
</dbReference>
<dbReference type="InterPro" id="IPR012340">
    <property type="entry name" value="NA-bd_OB-fold"/>
</dbReference>
<dbReference type="InterPro" id="IPR004150">
    <property type="entry name" value="NAD_DNA_ligase_OB"/>
</dbReference>
<dbReference type="InterPro" id="IPR010994">
    <property type="entry name" value="RuvA_2-like"/>
</dbReference>
<dbReference type="InterPro" id="IPR004149">
    <property type="entry name" value="Znf_DNAligase_C4"/>
</dbReference>
<dbReference type="NCBIfam" id="TIGR00575">
    <property type="entry name" value="dnlj"/>
    <property type="match status" value="1"/>
</dbReference>
<dbReference type="NCBIfam" id="NF005932">
    <property type="entry name" value="PRK07956.1"/>
    <property type="match status" value="1"/>
</dbReference>
<dbReference type="Pfam" id="PF00533">
    <property type="entry name" value="BRCT"/>
    <property type="match status" value="1"/>
</dbReference>
<dbReference type="Pfam" id="PF01653">
    <property type="entry name" value="DNA_ligase_aden"/>
    <property type="match status" value="1"/>
</dbReference>
<dbReference type="Pfam" id="PF03120">
    <property type="entry name" value="DNA_ligase_OB"/>
    <property type="match status" value="1"/>
</dbReference>
<dbReference type="Pfam" id="PF03119">
    <property type="entry name" value="DNA_ligase_ZBD"/>
    <property type="match status" value="1"/>
</dbReference>
<dbReference type="Pfam" id="PF14520">
    <property type="entry name" value="HHH_5"/>
    <property type="match status" value="2"/>
</dbReference>
<dbReference type="Pfam" id="PF22745">
    <property type="entry name" value="Nlig-Ia"/>
    <property type="match status" value="1"/>
</dbReference>
<dbReference type="PIRSF" id="PIRSF001604">
    <property type="entry name" value="LigA"/>
    <property type="match status" value="1"/>
</dbReference>
<dbReference type="SMART" id="SM00292">
    <property type="entry name" value="BRCT"/>
    <property type="match status" value="1"/>
</dbReference>
<dbReference type="SMART" id="SM00532">
    <property type="entry name" value="LIGANc"/>
    <property type="match status" value="1"/>
</dbReference>
<dbReference type="SUPFAM" id="SSF52113">
    <property type="entry name" value="BRCT domain"/>
    <property type="match status" value="1"/>
</dbReference>
<dbReference type="SUPFAM" id="SSF56091">
    <property type="entry name" value="DNA ligase/mRNA capping enzyme, catalytic domain"/>
    <property type="match status" value="1"/>
</dbReference>
<dbReference type="SUPFAM" id="SSF50249">
    <property type="entry name" value="Nucleic acid-binding proteins"/>
    <property type="match status" value="1"/>
</dbReference>
<dbReference type="SUPFAM" id="SSF47781">
    <property type="entry name" value="RuvA domain 2-like"/>
    <property type="match status" value="1"/>
</dbReference>
<dbReference type="PROSITE" id="PS50172">
    <property type="entry name" value="BRCT"/>
    <property type="match status" value="1"/>
</dbReference>
<sequence length="681" mass="77025">MSKKKKTYQNTLSEKEAKKVIAKLADEIRHHQYLYYVKNQPEISDFDFDQLFKRLRDLEEEFPQFKDLNSPTLVVGSDLDKDFEKFQHKLPVLSLINTYNDDELLDWVNKTDPDGLYSVEWKIDGASIVLYYENGMLKNGVTRGSGGIGDDVTDNIRTVRNIPLRLPEPITVYLRGEVFMTFKDFEEFNELSSGKYANPRNLSAGSIKQKNSADTAKRPLRIFTYDATFPGFTKKFKTHQQILSKLEKLTFPVPPDTVFVNGSKIAETIKDFKKKKDTLGFPTDGLVIKLNDISKRDAQGYTSHSPRWARAYKFDAIMKESRIVDITYAVGRTGKITPRVEIEPVNLAGTTVTFATLHNQDYIDELGVGIGAIVRVAKRGEIIPAVEEVITPGKDVFKIPDYCPSCKTKTIKKENLVDLFCPNPDCPDRVKNGIIFYCQRKQMDIEGLGDKQIEFLYDHGYIRSIADLYDLKDQKEKLIEEEGFGEKSLAIIFNGIEHSKQKDFRFLLPSIGLPELGHKVTELLIEHGIDSIDEILSIAKDKKRISSLLEIPGIGPSTIKAFEENFSDKRILKLIARLKNAGLKLKADPIKVSDQQPFAGQSWCVTGSFENFQPRDKAMDLVVYYGGRKVSAVSSKTTHLLAGPGAGSKLEKANELGIVVYNEKQFLDLLKSLKINFKNTI</sequence>
<feature type="chain" id="PRO_0000313291" description="DNA ligase">
    <location>
        <begin position="1"/>
        <end position="681"/>
    </location>
</feature>
<feature type="domain" description="BRCT" evidence="1">
    <location>
        <begin position="593"/>
        <end position="681"/>
    </location>
</feature>
<feature type="active site" description="N6-AMP-lysine intermediate" evidence="1">
    <location>
        <position position="122"/>
    </location>
</feature>
<feature type="binding site" evidence="1">
    <location>
        <begin position="45"/>
        <end position="49"/>
    </location>
    <ligand>
        <name>NAD(+)</name>
        <dbReference type="ChEBI" id="CHEBI:57540"/>
    </ligand>
</feature>
<feature type="binding site" evidence="1">
    <location>
        <begin position="94"/>
        <end position="95"/>
    </location>
    <ligand>
        <name>NAD(+)</name>
        <dbReference type="ChEBI" id="CHEBI:57540"/>
    </ligand>
</feature>
<feature type="binding site" evidence="1">
    <location>
        <position position="120"/>
    </location>
    <ligand>
        <name>NAD(+)</name>
        <dbReference type="ChEBI" id="CHEBI:57540"/>
    </ligand>
</feature>
<feature type="binding site" evidence="1">
    <location>
        <position position="143"/>
    </location>
    <ligand>
        <name>NAD(+)</name>
        <dbReference type="ChEBI" id="CHEBI:57540"/>
    </ligand>
</feature>
<feature type="binding site" evidence="1">
    <location>
        <position position="177"/>
    </location>
    <ligand>
        <name>NAD(+)</name>
        <dbReference type="ChEBI" id="CHEBI:57540"/>
    </ligand>
</feature>
<feature type="binding site" evidence="1">
    <location>
        <position position="289"/>
    </location>
    <ligand>
        <name>NAD(+)</name>
        <dbReference type="ChEBI" id="CHEBI:57540"/>
    </ligand>
</feature>
<feature type="binding site" evidence="1">
    <location>
        <position position="313"/>
    </location>
    <ligand>
        <name>NAD(+)</name>
        <dbReference type="ChEBI" id="CHEBI:57540"/>
    </ligand>
</feature>
<feature type="binding site" evidence="1">
    <location>
        <position position="403"/>
    </location>
    <ligand>
        <name>Zn(2+)</name>
        <dbReference type="ChEBI" id="CHEBI:29105"/>
    </ligand>
</feature>
<feature type="binding site" evidence="1">
    <location>
        <position position="406"/>
    </location>
    <ligand>
        <name>Zn(2+)</name>
        <dbReference type="ChEBI" id="CHEBI:29105"/>
    </ligand>
</feature>
<feature type="binding site" evidence="1">
    <location>
        <position position="421"/>
    </location>
    <ligand>
        <name>Zn(2+)</name>
        <dbReference type="ChEBI" id="CHEBI:29105"/>
    </ligand>
</feature>
<feature type="binding site" evidence="1">
    <location>
        <position position="426"/>
    </location>
    <ligand>
        <name>Zn(2+)</name>
        <dbReference type="ChEBI" id="CHEBI:29105"/>
    </ligand>
</feature>
<keyword id="KW-0227">DNA damage</keyword>
<keyword id="KW-0234">DNA repair</keyword>
<keyword id="KW-0235">DNA replication</keyword>
<keyword id="KW-0436">Ligase</keyword>
<keyword id="KW-0460">Magnesium</keyword>
<keyword id="KW-0464">Manganese</keyword>
<keyword id="KW-0479">Metal-binding</keyword>
<keyword id="KW-0520">NAD</keyword>
<keyword id="KW-0862">Zinc</keyword>
<proteinExistence type="inferred from homology"/>
<organism>
    <name type="scientific">Leptospira borgpetersenii serovar Hardjo-bovis (strain L550)</name>
    <dbReference type="NCBI Taxonomy" id="355276"/>
    <lineage>
        <taxon>Bacteria</taxon>
        <taxon>Pseudomonadati</taxon>
        <taxon>Spirochaetota</taxon>
        <taxon>Spirochaetia</taxon>
        <taxon>Leptospirales</taxon>
        <taxon>Leptospiraceae</taxon>
        <taxon>Leptospira</taxon>
    </lineage>
</organism>